<sequence length="600" mass="65698">MTASPKNEMSTVFKRLMTYVMPMKGMLTLSILGLIVYGLVDAAFIAFIKPFIDEGFSQNPTVVAGVELPTSGGFSANKDVMLMAPLVVIGMFTLRGVANFVSTYCISYLSAQLIMDMRQQVFEHYLRLPVSYIDRENSGNLISRVTFDTEQIARASGSALISIVRDSITVIGMLALMFFYSWKLSLCILVIGPLMGVVISIVSKRFRKVSVQIQSAMGGVTATTEQMIKGHKNVLSFGGQETESKRFYEVNDRNRYQNMKLAMAQSVSQPVIMIIGSFALAFVLYAASLDSMKLELTAGTFAAILGAMLAMLQPIKNLTRVNAEFQRGIAACTTVFELLDTLPESDTGAHQVERVQGHLRFDNVSFSYPGQAKPALNNIDFDVKPGKTVALVGRSGSGKSTMASLITRFYTGLEQGDIRLDDVSIYDYSLKSLRSQVALVSQQVTLFNDSIANNIAYAYPGEVSREQILKAATLAHAMEFIEQLPEGLDTQVGENGVLLSGGQRQRIAIARAMLRDAPVLILDEATSALDTESEKAIQLGLDNLRHNRTSIVIAHRLSTIESADEILVIDQGKIIERGTHASLIEKKGAYAGLYQMQFGE</sequence>
<evidence type="ECO:0000255" key="1">
    <source>
        <dbReference type="HAMAP-Rule" id="MF_01703"/>
    </source>
</evidence>
<name>MSBA_SHEDO</name>
<feature type="chain" id="PRO_0000271652" description="ATP-dependent lipid A-core flippase">
    <location>
        <begin position="1"/>
        <end position="600"/>
    </location>
</feature>
<feature type="transmembrane region" description="Helical" evidence="1">
    <location>
        <begin position="28"/>
        <end position="48"/>
    </location>
</feature>
<feature type="transmembrane region" description="Helical" evidence="1">
    <location>
        <begin position="80"/>
        <end position="100"/>
    </location>
</feature>
<feature type="transmembrane region" description="Helical" evidence="1">
    <location>
        <begin position="159"/>
        <end position="179"/>
    </location>
</feature>
<feature type="transmembrane region" description="Helical" evidence="1">
    <location>
        <begin position="182"/>
        <end position="202"/>
    </location>
</feature>
<feature type="transmembrane region" description="Helical" evidence="1">
    <location>
        <begin position="267"/>
        <end position="287"/>
    </location>
</feature>
<feature type="transmembrane region" description="Helical" evidence="1">
    <location>
        <begin position="295"/>
        <end position="315"/>
    </location>
</feature>
<feature type="domain" description="ABC transmembrane type-1" evidence="1">
    <location>
        <begin position="29"/>
        <end position="327"/>
    </location>
</feature>
<feature type="domain" description="ABC transporter" evidence="1">
    <location>
        <begin position="359"/>
        <end position="596"/>
    </location>
</feature>
<feature type="binding site" evidence="1">
    <location>
        <begin position="393"/>
        <end position="400"/>
    </location>
    <ligand>
        <name>ATP</name>
        <dbReference type="ChEBI" id="CHEBI:30616"/>
    </ligand>
</feature>
<proteinExistence type="inferred from homology"/>
<accession>Q12M46</accession>
<organism>
    <name type="scientific">Shewanella denitrificans (strain OS217 / ATCC BAA-1090 / DSM 15013)</name>
    <dbReference type="NCBI Taxonomy" id="318161"/>
    <lineage>
        <taxon>Bacteria</taxon>
        <taxon>Pseudomonadati</taxon>
        <taxon>Pseudomonadota</taxon>
        <taxon>Gammaproteobacteria</taxon>
        <taxon>Alteromonadales</taxon>
        <taxon>Shewanellaceae</taxon>
        <taxon>Shewanella</taxon>
    </lineage>
</organism>
<dbReference type="EC" id="7.5.2.6" evidence="1"/>
<dbReference type="EMBL" id="CP000302">
    <property type="protein sequence ID" value="ABE55480.1"/>
    <property type="molecule type" value="Genomic_DNA"/>
</dbReference>
<dbReference type="RefSeq" id="WP_011496633.1">
    <property type="nucleotide sequence ID" value="NC_007954.1"/>
</dbReference>
<dbReference type="SMR" id="Q12M46"/>
<dbReference type="STRING" id="318161.Sden_2199"/>
<dbReference type="KEGG" id="sdn:Sden_2199"/>
<dbReference type="eggNOG" id="COG1132">
    <property type="taxonomic scope" value="Bacteria"/>
</dbReference>
<dbReference type="HOGENOM" id="CLU_000604_84_3_6"/>
<dbReference type="OrthoDB" id="9782586at2"/>
<dbReference type="Proteomes" id="UP000001982">
    <property type="component" value="Chromosome"/>
</dbReference>
<dbReference type="GO" id="GO:0005886">
    <property type="term" value="C:plasma membrane"/>
    <property type="evidence" value="ECO:0007669"/>
    <property type="project" value="UniProtKB-SubCell"/>
</dbReference>
<dbReference type="GO" id="GO:0015421">
    <property type="term" value="F:ABC-type oligopeptide transporter activity"/>
    <property type="evidence" value="ECO:0007669"/>
    <property type="project" value="TreeGrafter"/>
</dbReference>
<dbReference type="GO" id="GO:0005524">
    <property type="term" value="F:ATP binding"/>
    <property type="evidence" value="ECO:0007669"/>
    <property type="project" value="UniProtKB-KW"/>
</dbReference>
<dbReference type="GO" id="GO:0016887">
    <property type="term" value="F:ATP hydrolysis activity"/>
    <property type="evidence" value="ECO:0007669"/>
    <property type="project" value="InterPro"/>
</dbReference>
<dbReference type="GO" id="GO:0034040">
    <property type="term" value="F:ATPase-coupled lipid transmembrane transporter activity"/>
    <property type="evidence" value="ECO:0007669"/>
    <property type="project" value="InterPro"/>
</dbReference>
<dbReference type="CDD" id="cd18552">
    <property type="entry name" value="ABC_6TM_MsbA_like"/>
    <property type="match status" value="1"/>
</dbReference>
<dbReference type="FunFam" id="3.40.50.300:FF:000140">
    <property type="entry name" value="Lipid A export ATP-binding/permease protein MsbA"/>
    <property type="match status" value="1"/>
</dbReference>
<dbReference type="Gene3D" id="1.20.1560.10">
    <property type="entry name" value="ABC transporter type 1, transmembrane domain"/>
    <property type="match status" value="1"/>
</dbReference>
<dbReference type="Gene3D" id="3.40.50.300">
    <property type="entry name" value="P-loop containing nucleotide triphosphate hydrolases"/>
    <property type="match status" value="1"/>
</dbReference>
<dbReference type="InterPro" id="IPR003593">
    <property type="entry name" value="AAA+_ATPase"/>
</dbReference>
<dbReference type="InterPro" id="IPR011527">
    <property type="entry name" value="ABC1_TM_dom"/>
</dbReference>
<dbReference type="InterPro" id="IPR036640">
    <property type="entry name" value="ABC1_TM_sf"/>
</dbReference>
<dbReference type="InterPro" id="IPR003439">
    <property type="entry name" value="ABC_transporter-like_ATP-bd"/>
</dbReference>
<dbReference type="InterPro" id="IPR017871">
    <property type="entry name" value="ABC_transporter-like_CS"/>
</dbReference>
<dbReference type="InterPro" id="IPR011917">
    <property type="entry name" value="ABC_transpr_lipidA"/>
</dbReference>
<dbReference type="InterPro" id="IPR027417">
    <property type="entry name" value="P-loop_NTPase"/>
</dbReference>
<dbReference type="InterPro" id="IPR039421">
    <property type="entry name" value="Type_1_exporter"/>
</dbReference>
<dbReference type="NCBIfam" id="TIGR02203">
    <property type="entry name" value="MsbA_lipidA"/>
    <property type="match status" value="1"/>
</dbReference>
<dbReference type="PANTHER" id="PTHR43394:SF1">
    <property type="entry name" value="ATP-BINDING CASSETTE SUB-FAMILY B MEMBER 10, MITOCHONDRIAL"/>
    <property type="match status" value="1"/>
</dbReference>
<dbReference type="PANTHER" id="PTHR43394">
    <property type="entry name" value="ATP-DEPENDENT PERMEASE MDL1, MITOCHONDRIAL"/>
    <property type="match status" value="1"/>
</dbReference>
<dbReference type="Pfam" id="PF00664">
    <property type="entry name" value="ABC_membrane"/>
    <property type="match status" value="1"/>
</dbReference>
<dbReference type="Pfam" id="PF00005">
    <property type="entry name" value="ABC_tran"/>
    <property type="match status" value="1"/>
</dbReference>
<dbReference type="SMART" id="SM00382">
    <property type="entry name" value="AAA"/>
    <property type="match status" value="1"/>
</dbReference>
<dbReference type="SUPFAM" id="SSF90123">
    <property type="entry name" value="ABC transporter transmembrane region"/>
    <property type="match status" value="1"/>
</dbReference>
<dbReference type="SUPFAM" id="SSF52540">
    <property type="entry name" value="P-loop containing nucleoside triphosphate hydrolases"/>
    <property type="match status" value="1"/>
</dbReference>
<dbReference type="PROSITE" id="PS50929">
    <property type="entry name" value="ABC_TM1F"/>
    <property type="match status" value="1"/>
</dbReference>
<dbReference type="PROSITE" id="PS00211">
    <property type="entry name" value="ABC_TRANSPORTER_1"/>
    <property type="match status" value="1"/>
</dbReference>
<dbReference type="PROSITE" id="PS50893">
    <property type="entry name" value="ABC_TRANSPORTER_2"/>
    <property type="match status" value="1"/>
</dbReference>
<dbReference type="PROSITE" id="PS51239">
    <property type="entry name" value="MSBA"/>
    <property type="match status" value="1"/>
</dbReference>
<gene>
    <name evidence="1" type="primary">msbA</name>
    <name type="ordered locus">Sden_2199</name>
</gene>
<reference key="1">
    <citation type="submission" date="2006-03" db="EMBL/GenBank/DDBJ databases">
        <title>Complete sequence of Shewanella denitrificans OS217.</title>
        <authorList>
            <consortium name="US DOE Joint Genome Institute"/>
            <person name="Copeland A."/>
            <person name="Lucas S."/>
            <person name="Lapidus A."/>
            <person name="Barry K."/>
            <person name="Detter J.C."/>
            <person name="Glavina del Rio T."/>
            <person name="Hammon N."/>
            <person name="Israni S."/>
            <person name="Dalin E."/>
            <person name="Tice H."/>
            <person name="Pitluck S."/>
            <person name="Brettin T."/>
            <person name="Bruce D."/>
            <person name="Han C."/>
            <person name="Tapia R."/>
            <person name="Gilna P."/>
            <person name="Kiss H."/>
            <person name="Schmutz J."/>
            <person name="Larimer F."/>
            <person name="Land M."/>
            <person name="Hauser L."/>
            <person name="Kyrpides N."/>
            <person name="Lykidis A."/>
            <person name="Richardson P."/>
        </authorList>
    </citation>
    <scope>NUCLEOTIDE SEQUENCE [LARGE SCALE GENOMIC DNA]</scope>
    <source>
        <strain>OS217 / ATCC BAA-1090 / DSM 15013</strain>
    </source>
</reference>
<protein>
    <recommendedName>
        <fullName evidence="1">ATP-dependent lipid A-core flippase</fullName>
        <ecNumber evidence="1">7.5.2.6</ecNumber>
    </recommendedName>
    <alternativeName>
        <fullName evidence="1">Lipid A export ATP-binding/permease protein MsbA</fullName>
    </alternativeName>
</protein>
<keyword id="KW-0067">ATP-binding</keyword>
<keyword id="KW-0997">Cell inner membrane</keyword>
<keyword id="KW-1003">Cell membrane</keyword>
<keyword id="KW-0445">Lipid transport</keyword>
<keyword id="KW-0472">Membrane</keyword>
<keyword id="KW-0547">Nucleotide-binding</keyword>
<keyword id="KW-1185">Reference proteome</keyword>
<keyword id="KW-1278">Translocase</keyword>
<keyword id="KW-0812">Transmembrane</keyword>
<keyword id="KW-1133">Transmembrane helix</keyword>
<keyword id="KW-0813">Transport</keyword>
<comment type="function">
    <text evidence="1">Involved in lipopolysaccharide (LPS) biosynthesis. Translocates lipid A-core from the inner to the outer leaflet of the inner membrane. Transmembrane domains (TMD) form a pore in the inner membrane and the ATP-binding domain (NBD) is responsible for energy generation.</text>
</comment>
<comment type="catalytic activity">
    <reaction evidence="1">
        <text>ATP + H2O + lipid A-core oligosaccharideSide 1 = ADP + phosphate + lipid A-core oligosaccharideSide 2.</text>
        <dbReference type="EC" id="7.5.2.6"/>
    </reaction>
</comment>
<comment type="subunit">
    <text evidence="1">Homodimer.</text>
</comment>
<comment type="subcellular location">
    <subcellularLocation>
        <location evidence="1">Cell inner membrane</location>
        <topology evidence="1">Multi-pass membrane protein</topology>
    </subcellularLocation>
</comment>
<comment type="domain">
    <text evidence="1">In MsbA the ATP-binding domain (NBD) and the transmembrane domain (TMD) are fused.</text>
</comment>
<comment type="similarity">
    <text evidence="1">Belongs to the ABC transporter superfamily. Lipid exporter (TC 3.A.1.106) family.</text>
</comment>